<organism>
    <name type="scientific">Shewanella baltica (strain OS195)</name>
    <dbReference type="NCBI Taxonomy" id="399599"/>
    <lineage>
        <taxon>Bacteria</taxon>
        <taxon>Pseudomonadati</taxon>
        <taxon>Pseudomonadota</taxon>
        <taxon>Gammaproteobacteria</taxon>
        <taxon>Alteromonadales</taxon>
        <taxon>Shewanellaceae</taxon>
        <taxon>Shewanella</taxon>
    </lineage>
</organism>
<feature type="chain" id="PRO_1000074469" description="UDP-N-acetylglucosamine--N-acetylmuramyl-(pentapeptide) pyrophosphoryl-undecaprenol N-acetylglucosamine transferase">
    <location>
        <begin position="1"/>
        <end position="362"/>
    </location>
</feature>
<feature type="binding site" evidence="1">
    <location>
        <begin position="15"/>
        <end position="17"/>
    </location>
    <ligand>
        <name>UDP-N-acetyl-alpha-D-glucosamine</name>
        <dbReference type="ChEBI" id="CHEBI:57705"/>
    </ligand>
</feature>
<feature type="binding site" evidence="1">
    <location>
        <position position="127"/>
    </location>
    <ligand>
        <name>UDP-N-acetyl-alpha-D-glucosamine</name>
        <dbReference type="ChEBI" id="CHEBI:57705"/>
    </ligand>
</feature>
<feature type="binding site" evidence="1">
    <location>
        <position position="165"/>
    </location>
    <ligand>
        <name>UDP-N-acetyl-alpha-D-glucosamine</name>
        <dbReference type="ChEBI" id="CHEBI:57705"/>
    </ligand>
</feature>
<feature type="binding site" evidence="1">
    <location>
        <position position="191"/>
    </location>
    <ligand>
        <name>UDP-N-acetyl-alpha-D-glucosamine</name>
        <dbReference type="ChEBI" id="CHEBI:57705"/>
    </ligand>
</feature>
<feature type="binding site" evidence="1">
    <location>
        <position position="247"/>
    </location>
    <ligand>
        <name>UDP-N-acetyl-alpha-D-glucosamine</name>
        <dbReference type="ChEBI" id="CHEBI:57705"/>
    </ligand>
</feature>
<feature type="binding site" evidence="1">
    <location>
        <begin position="266"/>
        <end position="271"/>
    </location>
    <ligand>
        <name>UDP-N-acetyl-alpha-D-glucosamine</name>
        <dbReference type="ChEBI" id="CHEBI:57705"/>
    </ligand>
</feature>
<feature type="binding site" evidence="1">
    <location>
        <position position="292"/>
    </location>
    <ligand>
        <name>UDP-N-acetyl-alpha-D-glucosamine</name>
        <dbReference type="ChEBI" id="CHEBI:57705"/>
    </ligand>
</feature>
<accession>A9KY29</accession>
<name>MURG_SHEB9</name>
<sequence>MTPAGKRILVMAGGTGGHVFPALAVAKYLAQQGWQVRWLGTADRMEARLVPQYGFDIDFIDIKGVRGNGLIRKLAAPFKVVRSILQAKAVIAEFKPDVVLGMGGFASGPGGVAARLAGIPLVLHEQNAIPGMTNKLLSRIATQVLCAFKNTFTTVKAKVVGNPIRQELIALGAQPKPEADKALKVLVVGGSLGAKVFNDLMPEAVAILSQQQSVTVWHQVGKDNLAGVKAAYQQHGQDGGVNIAEFIDDMEAAYRWADVVLCRAGALTVSELAAVGLPSILVPYPHAVDDHQTRNGQVLVEAGAAFLLPQAILDVNKLAGKLQLLANDRTELARMGQRARDVAVLDATEQVAAVCISLAEKG</sequence>
<evidence type="ECO:0000255" key="1">
    <source>
        <dbReference type="HAMAP-Rule" id="MF_00033"/>
    </source>
</evidence>
<comment type="function">
    <text evidence="1">Cell wall formation. Catalyzes the transfer of a GlcNAc subunit on undecaprenyl-pyrophosphoryl-MurNAc-pentapeptide (lipid intermediate I) to form undecaprenyl-pyrophosphoryl-MurNAc-(pentapeptide)GlcNAc (lipid intermediate II).</text>
</comment>
<comment type="catalytic activity">
    <reaction evidence="1">
        <text>di-trans,octa-cis-undecaprenyl diphospho-N-acetyl-alpha-D-muramoyl-L-alanyl-D-glutamyl-meso-2,6-diaminopimeloyl-D-alanyl-D-alanine + UDP-N-acetyl-alpha-D-glucosamine = di-trans,octa-cis-undecaprenyl diphospho-[N-acetyl-alpha-D-glucosaminyl-(1-&gt;4)]-N-acetyl-alpha-D-muramoyl-L-alanyl-D-glutamyl-meso-2,6-diaminopimeloyl-D-alanyl-D-alanine + UDP + H(+)</text>
        <dbReference type="Rhea" id="RHEA:31227"/>
        <dbReference type="ChEBI" id="CHEBI:15378"/>
        <dbReference type="ChEBI" id="CHEBI:57705"/>
        <dbReference type="ChEBI" id="CHEBI:58223"/>
        <dbReference type="ChEBI" id="CHEBI:61387"/>
        <dbReference type="ChEBI" id="CHEBI:61388"/>
        <dbReference type="EC" id="2.4.1.227"/>
    </reaction>
</comment>
<comment type="pathway">
    <text evidence="1">Cell wall biogenesis; peptidoglycan biosynthesis.</text>
</comment>
<comment type="subcellular location">
    <subcellularLocation>
        <location evidence="1">Cell inner membrane</location>
        <topology evidence="1">Peripheral membrane protein</topology>
        <orientation evidence="1">Cytoplasmic side</orientation>
    </subcellularLocation>
</comment>
<comment type="similarity">
    <text evidence="1">Belongs to the glycosyltransferase 28 family. MurG subfamily.</text>
</comment>
<proteinExistence type="inferred from homology"/>
<gene>
    <name evidence="1" type="primary">murG</name>
    <name type="ordered locus">Sbal195_0413</name>
</gene>
<dbReference type="EC" id="2.4.1.227" evidence="1"/>
<dbReference type="EMBL" id="CP000891">
    <property type="protein sequence ID" value="ABX47594.1"/>
    <property type="molecule type" value="Genomic_DNA"/>
</dbReference>
<dbReference type="RefSeq" id="WP_006086700.1">
    <property type="nucleotide sequence ID" value="NC_009997.1"/>
</dbReference>
<dbReference type="SMR" id="A9KY29"/>
<dbReference type="CAZy" id="GT28">
    <property type="family name" value="Glycosyltransferase Family 28"/>
</dbReference>
<dbReference type="GeneID" id="11770751"/>
<dbReference type="KEGG" id="sbn:Sbal195_0413"/>
<dbReference type="HOGENOM" id="CLU_037404_2_0_6"/>
<dbReference type="UniPathway" id="UPA00219"/>
<dbReference type="Proteomes" id="UP000000770">
    <property type="component" value="Chromosome"/>
</dbReference>
<dbReference type="GO" id="GO:0005886">
    <property type="term" value="C:plasma membrane"/>
    <property type="evidence" value="ECO:0007669"/>
    <property type="project" value="UniProtKB-SubCell"/>
</dbReference>
<dbReference type="GO" id="GO:0051991">
    <property type="term" value="F:UDP-N-acetyl-D-glucosamine:N-acetylmuramoyl-L-alanyl-D-glutamyl-meso-2,6-diaminopimelyl-D-alanyl-D-alanine-diphosphoundecaprenol 4-beta-N-acetylglucosaminlytransferase activity"/>
    <property type="evidence" value="ECO:0007669"/>
    <property type="project" value="RHEA"/>
</dbReference>
<dbReference type="GO" id="GO:0050511">
    <property type="term" value="F:undecaprenyldiphospho-muramoylpentapeptide beta-N-acetylglucosaminyltransferase activity"/>
    <property type="evidence" value="ECO:0007669"/>
    <property type="project" value="UniProtKB-UniRule"/>
</dbReference>
<dbReference type="GO" id="GO:0005975">
    <property type="term" value="P:carbohydrate metabolic process"/>
    <property type="evidence" value="ECO:0007669"/>
    <property type="project" value="InterPro"/>
</dbReference>
<dbReference type="GO" id="GO:0051301">
    <property type="term" value="P:cell division"/>
    <property type="evidence" value="ECO:0007669"/>
    <property type="project" value="UniProtKB-KW"/>
</dbReference>
<dbReference type="GO" id="GO:0071555">
    <property type="term" value="P:cell wall organization"/>
    <property type="evidence" value="ECO:0007669"/>
    <property type="project" value="UniProtKB-KW"/>
</dbReference>
<dbReference type="GO" id="GO:0030259">
    <property type="term" value="P:lipid glycosylation"/>
    <property type="evidence" value="ECO:0007669"/>
    <property type="project" value="UniProtKB-UniRule"/>
</dbReference>
<dbReference type="GO" id="GO:0009252">
    <property type="term" value="P:peptidoglycan biosynthetic process"/>
    <property type="evidence" value="ECO:0007669"/>
    <property type="project" value="UniProtKB-UniRule"/>
</dbReference>
<dbReference type="GO" id="GO:0008360">
    <property type="term" value="P:regulation of cell shape"/>
    <property type="evidence" value="ECO:0007669"/>
    <property type="project" value="UniProtKB-KW"/>
</dbReference>
<dbReference type="CDD" id="cd03785">
    <property type="entry name" value="GT28_MurG"/>
    <property type="match status" value="1"/>
</dbReference>
<dbReference type="Gene3D" id="3.40.50.2000">
    <property type="entry name" value="Glycogen Phosphorylase B"/>
    <property type="match status" value="2"/>
</dbReference>
<dbReference type="HAMAP" id="MF_00033">
    <property type="entry name" value="MurG"/>
    <property type="match status" value="1"/>
</dbReference>
<dbReference type="InterPro" id="IPR006009">
    <property type="entry name" value="GlcNAc_MurG"/>
</dbReference>
<dbReference type="InterPro" id="IPR007235">
    <property type="entry name" value="Glyco_trans_28_C"/>
</dbReference>
<dbReference type="InterPro" id="IPR004276">
    <property type="entry name" value="GlycoTrans_28_N"/>
</dbReference>
<dbReference type="NCBIfam" id="TIGR01133">
    <property type="entry name" value="murG"/>
    <property type="match status" value="1"/>
</dbReference>
<dbReference type="PANTHER" id="PTHR21015:SF22">
    <property type="entry name" value="GLYCOSYLTRANSFERASE"/>
    <property type="match status" value="1"/>
</dbReference>
<dbReference type="PANTHER" id="PTHR21015">
    <property type="entry name" value="UDP-N-ACETYLGLUCOSAMINE--N-ACETYLMURAMYL-(PENTAPEPTIDE) PYROPHOSPHORYL-UNDECAPRENOL N-ACETYLGLUCOSAMINE TRANSFERASE 1"/>
    <property type="match status" value="1"/>
</dbReference>
<dbReference type="Pfam" id="PF04101">
    <property type="entry name" value="Glyco_tran_28_C"/>
    <property type="match status" value="1"/>
</dbReference>
<dbReference type="Pfam" id="PF03033">
    <property type="entry name" value="Glyco_transf_28"/>
    <property type="match status" value="1"/>
</dbReference>
<dbReference type="SUPFAM" id="SSF53756">
    <property type="entry name" value="UDP-Glycosyltransferase/glycogen phosphorylase"/>
    <property type="match status" value="1"/>
</dbReference>
<reference key="1">
    <citation type="submission" date="2007-11" db="EMBL/GenBank/DDBJ databases">
        <title>Complete sequence of chromosome of Shewanella baltica OS195.</title>
        <authorList>
            <consortium name="US DOE Joint Genome Institute"/>
            <person name="Copeland A."/>
            <person name="Lucas S."/>
            <person name="Lapidus A."/>
            <person name="Barry K."/>
            <person name="Glavina del Rio T."/>
            <person name="Dalin E."/>
            <person name="Tice H."/>
            <person name="Pitluck S."/>
            <person name="Chain P."/>
            <person name="Malfatti S."/>
            <person name="Shin M."/>
            <person name="Vergez L."/>
            <person name="Schmutz J."/>
            <person name="Larimer F."/>
            <person name="Land M."/>
            <person name="Hauser L."/>
            <person name="Kyrpides N."/>
            <person name="Kim E."/>
            <person name="Brettar I."/>
            <person name="Rodrigues J."/>
            <person name="Konstantinidis K."/>
            <person name="Klappenbach J."/>
            <person name="Hofle M."/>
            <person name="Tiedje J."/>
            <person name="Richardson P."/>
        </authorList>
    </citation>
    <scope>NUCLEOTIDE SEQUENCE [LARGE SCALE GENOMIC DNA]</scope>
    <source>
        <strain>OS195</strain>
    </source>
</reference>
<protein>
    <recommendedName>
        <fullName evidence="1">UDP-N-acetylglucosamine--N-acetylmuramyl-(pentapeptide) pyrophosphoryl-undecaprenol N-acetylglucosamine transferase</fullName>
        <ecNumber evidence="1">2.4.1.227</ecNumber>
    </recommendedName>
    <alternativeName>
        <fullName evidence="1">Undecaprenyl-PP-MurNAc-pentapeptide-UDPGlcNAc GlcNAc transferase</fullName>
    </alternativeName>
</protein>
<keyword id="KW-0131">Cell cycle</keyword>
<keyword id="KW-0132">Cell division</keyword>
<keyword id="KW-0997">Cell inner membrane</keyword>
<keyword id="KW-1003">Cell membrane</keyword>
<keyword id="KW-0133">Cell shape</keyword>
<keyword id="KW-0961">Cell wall biogenesis/degradation</keyword>
<keyword id="KW-0328">Glycosyltransferase</keyword>
<keyword id="KW-0472">Membrane</keyword>
<keyword id="KW-0573">Peptidoglycan synthesis</keyword>
<keyword id="KW-0808">Transferase</keyword>